<organism>
    <name type="scientific">Alkaliphilus metalliredigens (strain QYMF)</name>
    <dbReference type="NCBI Taxonomy" id="293826"/>
    <lineage>
        <taxon>Bacteria</taxon>
        <taxon>Bacillati</taxon>
        <taxon>Bacillota</taxon>
        <taxon>Clostridia</taxon>
        <taxon>Peptostreptococcales</taxon>
        <taxon>Natronincolaceae</taxon>
        <taxon>Alkaliphilus</taxon>
    </lineage>
</organism>
<name>IF1_ALKMQ</name>
<proteinExistence type="inferred from homology"/>
<accession>A6TWF8</accession>
<keyword id="KW-0963">Cytoplasm</keyword>
<keyword id="KW-0396">Initiation factor</keyword>
<keyword id="KW-0648">Protein biosynthesis</keyword>
<keyword id="KW-1185">Reference proteome</keyword>
<keyword id="KW-0694">RNA-binding</keyword>
<keyword id="KW-0699">rRNA-binding</keyword>
<evidence type="ECO:0000255" key="1">
    <source>
        <dbReference type="HAMAP-Rule" id="MF_00075"/>
    </source>
</evidence>
<sequence length="72" mass="8211">MSKEDVIEVEGVIKEALPNATFQVELENGHVVLAHLSGKLRMHFIRILPGDKVTVELSPYDLTRGRITWRKK</sequence>
<gene>
    <name evidence="1" type="primary">infA</name>
    <name type="ordered locus">Amet_4454</name>
</gene>
<dbReference type="EMBL" id="CP000724">
    <property type="protein sequence ID" value="ABR50526.1"/>
    <property type="molecule type" value="Genomic_DNA"/>
</dbReference>
<dbReference type="RefSeq" id="WP_012065417.1">
    <property type="nucleotide sequence ID" value="NC_009633.1"/>
</dbReference>
<dbReference type="SMR" id="A6TWF8"/>
<dbReference type="STRING" id="293826.Amet_4454"/>
<dbReference type="KEGG" id="amt:Amet_4454"/>
<dbReference type="eggNOG" id="COG0361">
    <property type="taxonomic scope" value="Bacteria"/>
</dbReference>
<dbReference type="HOGENOM" id="CLU_151267_1_0_9"/>
<dbReference type="OrthoDB" id="9803250at2"/>
<dbReference type="Proteomes" id="UP000001572">
    <property type="component" value="Chromosome"/>
</dbReference>
<dbReference type="GO" id="GO:0005829">
    <property type="term" value="C:cytosol"/>
    <property type="evidence" value="ECO:0007669"/>
    <property type="project" value="TreeGrafter"/>
</dbReference>
<dbReference type="GO" id="GO:0043022">
    <property type="term" value="F:ribosome binding"/>
    <property type="evidence" value="ECO:0007669"/>
    <property type="project" value="UniProtKB-UniRule"/>
</dbReference>
<dbReference type="GO" id="GO:0019843">
    <property type="term" value="F:rRNA binding"/>
    <property type="evidence" value="ECO:0007669"/>
    <property type="project" value="UniProtKB-UniRule"/>
</dbReference>
<dbReference type="GO" id="GO:0003743">
    <property type="term" value="F:translation initiation factor activity"/>
    <property type="evidence" value="ECO:0007669"/>
    <property type="project" value="UniProtKB-UniRule"/>
</dbReference>
<dbReference type="CDD" id="cd04451">
    <property type="entry name" value="S1_IF1"/>
    <property type="match status" value="1"/>
</dbReference>
<dbReference type="FunFam" id="2.40.50.140:FF:000002">
    <property type="entry name" value="Translation initiation factor IF-1"/>
    <property type="match status" value="1"/>
</dbReference>
<dbReference type="Gene3D" id="2.40.50.140">
    <property type="entry name" value="Nucleic acid-binding proteins"/>
    <property type="match status" value="1"/>
</dbReference>
<dbReference type="HAMAP" id="MF_00075">
    <property type="entry name" value="IF_1"/>
    <property type="match status" value="1"/>
</dbReference>
<dbReference type="InterPro" id="IPR012340">
    <property type="entry name" value="NA-bd_OB-fold"/>
</dbReference>
<dbReference type="InterPro" id="IPR006196">
    <property type="entry name" value="RNA-binding_domain_S1_IF1"/>
</dbReference>
<dbReference type="InterPro" id="IPR003029">
    <property type="entry name" value="S1_domain"/>
</dbReference>
<dbReference type="InterPro" id="IPR004368">
    <property type="entry name" value="TIF_IF1"/>
</dbReference>
<dbReference type="NCBIfam" id="TIGR00008">
    <property type="entry name" value="infA"/>
    <property type="match status" value="1"/>
</dbReference>
<dbReference type="PANTHER" id="PTHR33370">
    <property type="entry name" value="TRANSLATION INITIATION FACTOR IF-1, CHLOROPLASTIC"/>
    <property type="match status" value="1"/>
</dbReference>
<dbReference type="PANTHER" id="PTHR33370:SF1">
    <property type="entry name" value="TRANSLATION INITIATION FACTOR IF-1, CHLOROPLASTIC"/>
    <property type="match status" value="1"/>
</dbReference>
<dbReference type="Pfam" id="PF01176">
    <property type="entry name" value="eIF-1a"/>
    <property type="match status" value="1"/>
</dbReference>
<dbReference type="SMART" id="SM00316">
    <property type="entry name" value="S1"/>
    <property type="match status" value="1"/>
</dbReference>
<dbReference type="SUPFAM" id="SSF50249">
    <property type="entry name" value="Nucleic acid-binding proteins"/>
    <property type="match status" value="1"/>
</dbReference>
<dbReference type="PROSITE" id="PS50832">
    <property type="entry name" value="S1_IF1_TYPE"/>
    <property type="match status" value="1"/>
</dbReference>
<protein>
    <recommendedName>
        <fullName evidence="1">Translation initiation factor IF-1</fullName>
    </recommendedName>
</protein>
<comment type="function">
    <text evidence="1">One of the essential components for the initiation of protein synthesis. Stabilizes the binding of IF-2 and IF-3 on the 30S subunit to which N-formylmethionyl-tRNA(fMet) subsequently binds. Helps modulate mRNA selection, yielding the 30S pre-initiation complex (PIC). Upon addition of the 50S ribosomal subunit IF-1, IF-2 and IF-3 are released leaving the mature 70S translation initiation complex.</text>
</comment>
<comment type="subunit">
    <text evidence="1">Component of the 30S ribosomal translation pre-initiation complex which assembles on the 30S ribosome in the order IF-2 and IF-3, IF-1 and N-formylmethionyl-tRNA(fMet); mRNA recruitment can occur at any time during PIC assembly.</text>
</comment>
<comment type="subcellular location">
    <subcellularLocation>
        <location evidence="1">Cytoplasm</location>
    </subcellularLocation>
</comment>
<comment type="similarity">
    <text evidence="1">Belongs to the IF-1 family.</text>
</comment>
<reference key="1">
    <citation type="journal article" date="2016" name="Genome Announc.">
        <title>Complete genome sequence of Alkaliphilus metalliredigens strain QYMF, an alkaliphilic and metal-reducing bacterium isolated from borax-contaminated leachate ponds.</title>
        <authorList>
            <person name="Hwang C."/>
            <person name="Copeland A."/>
            <person name="Lucas S."/>
            <person name="Lapidus A."/>
            <person name="Barry K."/>
            <person name="Detter J.C."/>
            <person name="Glavina Del Rio T."/>
            <person name="Hammon N."/>
            <person name="Israni S."/>
            <person name="Dalin E."/>
            <person name="Tice H."/>
            <person name="Pitluck S."/>
            <person name="Chertkov O."/>
            <person name="Brettin T."/>
            <person name="Bruce D."/>
            <person name="Han C."/>
            <person name="Schmutz J."/>
            <person name="Larimer F."/>
            <person name="Land M.L."/>
            <person name="Hauser L."/>
            <person name="Kyrpides N."/>
            <person name="Mikhailova N."/>
            <person name="Ye Q."/>
            <person name="Zhou J."/>
            <person name="Richardson P."/>
            <person name="Fields M.W."/>
        </authorList>
    </citation>
    <scope>NUCLEOTIDE SEQUENCE [LARGE SCALE GENOMIC DNA]</scope>
    <source>
        <strain>QYMF</strain>
    </source>
</reference>
<feature type="chain" id="PRO_0000338756" description="Translation initiation factor IF-1">
    <location>
        <begin position="1"/>
        <end position="72"/>
    </location>
</feature>
<feature type="domain" description="S1-like" evidence="1">
    <location>
        <begin position="1"/>
        <end position="72"/>
    </location>
</feature>